<comment type="subunit">
    <text evidence="1">Part of the 50S ribosomal subunit.</text>
</comment>
<comment type="subcellular location">
    <subcellularLocation>
        <location>Plastid</location>
        <location>Chloroplast</location>
    </subcellularLocation>
</comment>
<comment type="similarity">
    <text evidence="1">Belongs to the universal ribosomal protein uL16 family.</text>
</comment>
<evidence type="ECO:0000255" key="1">
    <source>
        <dbReference type="HAMAP-Rule" id="MF_01342"/>
    </source>
</evidence>
<evidence type="ECO:0000256" key="2">
    <source>
        <dbReference type="SAM" id="MobiDB-lite"/>
    </source>
</evidence>
<evidence type="ECO:0000305" key="3"/>
<reference key="1">
    <citation type="submission" date="2006-09" db="EMBL/GenBank/DDBJ databases">
        <title>Cloning and analysis of the Porphyra yezoensis gene for rpl16.</title>
        <authorList>
            <person name="Wang M.Q."/>
            <person name="Mao Y.X."/>
        </authorList>
    </citation>
    <scope>NUCLEOTIDE SEQUENCE [GENOMIC DNA]</scope>
    <source>
        <strain>Qingdao</strain>
    </source>
</reference>
<reference key="2">
    <citation type="submission" date="2003-11" db="EMBL/GenBank/DDBJ databases">
        <title>Whole genome sequence of Porphyra yezoensis chloroplast.</title>
        <authorList>
            <person name="Kunimoto M."/>
            <person name="Morishima K."/>
            <person name="Yoshikawa M."/>
            <person name="Fukuda S."/>
            <person name="Kobayashi T."/>
            <person name="Kobayashi M."/>
            <person name="Okazaki T."/>
            <person name="Ohara I."/>
            <person name="Nakayama I."/>
        </authorList>
    </citation>
    <scope>NUCLEOTIDE SEQUENCE [LARGE SCALE GENOMIC DNA]</scope>
    <source>
        <strain>U-51</strain>
    </source>
</reference>
<protein>
    <recommendedName>
        <fullName evidence="1">Large ribosomal subunit protein uL16c</fullName>
    </recommendedName>
    <alternativeName>
        <fullName evidence="3">50S ribosomal protein L16, chloroplastic</fullName>
    </alternativeName>
</protein>
<organism>
    <name type="scientific">Pyropia yezoensis</name>
    <name type="common">Susabi-nori</name>
    <name type="synonym">Porphyra yezoensis</name>
    <dbReference type="NCBI Taxonomy" id="2788"/>
    <lineage>
        <taxon>Eukaryota</taxon>
        <taxon>Rhodophyta</taxon>
        <taxon>Bangiophyceae</taxon>
        <taxon>Bangiales</taxon>
        <taxon>Bangiaceae</taxon>
        <taxon>Pyropia</taxon>
    </lineage>
</organism>
<feature type="chain" id="PRO_0000251698" description="Large ribosomal subunit protein uL16c">
    <location>
        <begin position="1"/>
        <end position="139"/>
    </location>
</feature>
<feature type="region of interest" description="Disordered" evidence="2">
    <location>
        <begin position="1"/>
        <end position="23"/>
    </location>
</feature>
<feature type="compositionally biased region" description="Basic residues" evidence="2">
    <location>
        <begin position="1"/>
        <end position="17"/>
    </location>
</feature>
<feature type="sequence conflict" description="In Ref. 1; ABJ91318." evidence="3" ref="1">
    <original>V</original>
    <variation>A</variation>
    <location>
        <position position="58"/>
    </location>
</feature>
<proteinExistence type="inferred from homology"/>
<dbReference type="EMBL" id="DQ995203">
    <property type="protein sequence ID" value="ABJ91318.1"/>
    <property type="molecule type" value="Genomic_DNA"/>
</dbReference>
<dbReference type="EMBL" id="AP006715">
    <property type="protein sequence ID" value="BAE92430.1"/>
    <property type="molecule type" value="Genomic_DNA"/>
</dbReference>
<dbReference type="RefSeq" id="YP_536987.1">
    <property type="nucleotide sequence ID" value="NC_007932.1"/>
</dbReference>
<dbReference type="SMR" id="Q1XDI1"/>
<dbReference type="GeneID" id="3978804"/>
<dbReference type="GO" id="GO:0009507">
    <property type="term" value="C:chloroplast"/>
    <property type="evidence" value="ECO:0007669"/>
    <property type="project" value="UniProtKB-SubCell"/>
</dbReference>
<dbReference type="GO" id="GO:0005762">
    <property type="term" value="C:mitochondrial large ribosomal subunit"/>
    <property type="evidence" value="ECO:0007669"/>
    <property type="project" value="TreeGrafter"/>
</dbReference>
<dbReference type="GO" id="GO:0019843">
    <property type="term" value="F:rRNA binding"/>
    <property type="evidence" value="ECO:0007669"/>
    <property type="project" value="InterPro"/>
</dbReference>
<dbReference type="GO" id="GO:0003735">
    <property type="term" value="F:structural constituent of ribosome"/>
    <property type="evidence" value="ECO:0007669"/>
    <property type="project" value="InterPro"/>
</dbReference>
<dbReference type="GO" id="GO:0032543">
    <property type="term" value="P:mitochondrial translation"/>
    <property type="evidence" value="ECO:0007669"/>
    <property type="project" value="TreeGrafter"/>
</dbReference>
<dbReference type="CDD" id="cd01433">
    <property type="entry name" value="Ribosomal_L16_L10e"/>
    <property type="match status" value="1"/>
</dbReference>
<dbReference type="FunFam" id="3.90.1170.10:FF:000001">
    <property type="entry name" value="50S ribosomal protein L16"/>
    <property type="match status" value="1"/>
</dbReference>
<dbReference type="Gene3D" id="3.90.1170.10">
    <property type="entry name" value="Ribosomal protein L10e/L16"/>
    <property type="match status" value="1"/>
</dbReference>
<dbReference type="HAMAP" id="MF_01342">
    <property type="entry name" value="Ribosomal_uL16"/>
    <property type="match status" value="1"/>
</dbReference>
<dbReference type="InterPro" id="IPR047873">
    <property type="entry name" value="Ribosomal_uL16"/>
</dbReference>
<dbReference type="InterPro" id="IPR000114">
    <property type="entry name" value="Ribosomal_uL16_bact-type"/>
</dbReference>
<dbReference type="InterPro" id="IPR020798">
    <property type="entry name" value="Ribosomal_uL16_CS"/>
</dbReference>
<dbReference type="InterPro" id="IPR016180">
    <property type="entry name" value="Ribosomal_uL16_dom"/>
</dbReference>
<dbReference type="InterPro" id="IPR036920">
    <property type="entry name" value="Ribosomal_uL16_sf"/>
</dbReference>
<dbReference type="NCBIfam" id="TIGR01164">
    <property type="entry name" value="rplP_bact"/>
    <property type="match status" value="1"/>
</dbReference>
<dbReference type="PANTHER" id="PTHR12220">
    <property type="entry name" value="50S/60S RIBOSOMAL PROTEIN L16"/>
    <property type="match status" value="1"/>
</dbReference>
<dbReference type="PANTHER" id="PTHR12220:SF13">
    <property type="entry name" value="LARGE RIBOSOMAL SUBUNIT PROTEIN UL16M"/>
    <property type="match status" value="1"/>
</dbReference>
<dbReference type="Pfam" id="PF00252">
    <property type="entry name" value="Ribosomal_L16"/>
    <property type="match status" value="1"/>
</dbReference>
<dbReference type="PRINTS" id="PR00060">
    <property type="entry name" value="RIBOSOMALL16"/>
</dbReference>
<dbReference type="SUPFAM" id="SSF54686">
    <property type="entry name" value="Ribosomal protein L16p/L10e"/>
    <property type="match status" value="1"/>
</dbReference>
<dbReference type="PROSITE" id="PS00586">
    <property type="entry name" value="RIBOSOMAL_L16_1"/>
    <property type="match status" value="1"/>
</dbReference>
<dbReference type="PROSITE" id="PS00701">
    <property type="entry name" value="RIBOSOMAL_L16_2"/>
    <property type="match status" value="1"/>
</dbReference>
<accession>Q1XDI1</accession>
<accession>A0MMB0</accession>
<sequence>MLSPKKTKFRKQHRGRMKGSASKGNTIAFGDYALQATEPVWLTSRQIEATRRTITRYVRRGGKLWIRVFPDKPVTARPAETRMGSGKGAPEYWVAVIKPGHILFEITGVPQKTAQQAMKLASYKLPIKTKFIVRNTTES</sequence>
<geneLocation type="chloroplast"/>
<gene>
    <name evidence="1" type="primary">rpl16</name>
</gene>
<keyword id="KW-0150">Chloroplast</keyword>
<keyword id="KW-0934">Plastid</keyword>
<keyword id="KW-0687">Ribonucleoprotein</keyword>
<keyword id="KW-0689">Ribosomal protein</keyword>
<name>RK16_PYRYE</name>